<reference key="1">
    <citation type="journal article" date="1996" name="Mol. Microbiol.">
        <title>Structural and functional analysis of aa3-type and cbb3-type cytochrome c oxidases of Paracoccus denitrificans reveals significant differences in proton-pump design.</title>
        <authorList>
            <person name="de Gier J.W."/>
            <person name="Schepper M."/>
            <person name="Reijnders W.N.M."/>
            <person name="van Dyck S.J."/>
            <person name="Slotboom D.J."/>
            <person name="Warne A."/>
            <person name="Saraste M."/>
            <person name="Krab K."/>
            <person name="Finel M."/>
            <person name="Stouthamer A.H."/>
            <person name="van Spanning R.J.M."/>
            <person name="der Oost J."/>
        </authorList>
    </citation>
    <scope>NUCLEOTIDE SEQUENCE [GENOMIC DNA]</scope>
</reference>
<reference key="2">
    <citation type="submission" date="2006-12" db="EMBL/GenBank/DDBJ databases">
        <title>Complete sequence of chromosome 1 of Paracoccus denitrificans PD1222.</title>
        <authorList>
            <person name="Copeland A."/>
            <person name="Lucas S."/>
            <person name="Lapidus A."/>
            <person name="Barry K."/>
            <person name="Detter J.C."/>
            <person name="Glavina del Rio T."/>
            <person name="Hammon N."/>
            <person name="Israni S."/>
            <person name="Dalin E."/>
            <person name="Tice H."/>
            <person name="Pitluck S."/>
            <person name="Munk A.C."/>
            <person name="Brettin T."/>
            <person name="Bruce D."/>
            <person name="Han C."/>
            <person name="Tapia R."/>
            <person name="Gilna P."/>
            <person name="Schmutz J."/>
            <person name="Larimer F."/>
            <person name="Land M."/>
            <person name="Hauser L."/>
            <person name="Kyrpides N."/>
            <person name="Lykidis A."/>
            <person name="Spiro S."/>
            <person name="Richardson D.J."/>
            <person name="Moir J.W.B."/>
            <person name="Ferguson S.J."/>
            <person name="van Spanning R.J.M."/>
            <person name="Richardson P."/>
        </authorList>
    </citation>
    <scope>NUCLEOTIDE SEQUENCE [LARGE SCALE GENOMIC DNA]</scope>
    <source>
        <strain>Pd 1222</strain>
    </source>
</reference>
<protein>
    <recommendedName>
        <fullName>Oxygen-independent coproporphyrinogen III oxidase</fullName>
        <shortName>CPO</shortName>
        <ecNumber evidence="1">1.3.98.3</ecNumber>
    </recommendedName>
    <alternativeName>
        <fullName>Coproporphyrinogen III dehydrogenase</fullName>
        <shortName>CPDH</shortName>
    </alternativeName>
</protein>
<keyword id="KW-0004">4Fe-4S</keyword>
<keyword id="KW-0963">Cytoplasm</keyword>
<keyword id="KW-0408">Iron</keyword>
<keyword id="KW-0411">Iron-sulfur</keyword>
<keyword id="KW-0479">Metal-binding</keyword>
<keyword id="KW-0560">Oxidoreductase</keyword>
<keyword id="KW-0627">Porphyrin biosynthesis</keyword>
<keyword id="KW-1185">Reference proteome</keyword>
<keyword id="KW-0949">S-adenosyl-L-methionine</keyword>
<proteinExistence type="inferred from homology"/>
<accession>Q51676</accession>
<accession>A1B354</accession>
<name>HEMN_PARDP</name>
<organism>
    <name type="scientific">Paracoccus denitrificans (strain Pd 1222)</name>
    <dbReference type="NCBI Taxonomy" id="318586"/>
    <lineage>
        <taxon>Bacteria</taxon>
        <taxon>Pseudomonadati</taxon>
        <taxon>Pseudomonadota</taxon>
        <taxon>Alphaproteobacteria</taxon>
        <taxon>Rhodobacterales</taxon>
        <taxon>Paracoccaceae</taxon>
        <taxon>Paracoccus</taxon>
    </lineage>
</organism>
<sequence length="451" mass="49848">MEQQSQLERLGLFDARVPRYTSYPTAPHFTPAVGEPVFRDWIAAIPAGAAISLYMHVPFCRRLCWFCACRTQGTQSDEPVRAYAKALLAELDMLKSALAPGVRLSRLHWGGGTPTLMPAEMMRLVAGAVLDAFPLAEGAEFSVEIDPNEIDEARMDALAEAGLNRASIGVQDFDPEIQKIIGREQSFEVTKRAVDMIRDRGIASLNADILYGLPHQDPHRIAESVQKLLALSPDRVALYGYAHVPWMAKRQVMIPSEALPDPHGRLRLFETARELFLADGYDEIGIDHFARPGDGLARAQKAGLLRRNFQGYTDDRAEVLVGLGASSISRFPQGYAQNAPATGAHLARIRDGRFSTTRGHAFSAEDRWRSRMIEALMCDFEIRAEEFIRDHGFDAESLSRILTPVAAHFGDMVDADASGLRITPRGRPLTRMIARMFDGYDMAASGHSAAI</sequence>
<comment type="function">
    <text evidence="1">Involved in the heme biosynthesis. Catalyzes the anaerobic oxidative decarboxylation of propionate groups of rings A and B of coproporphyrinogen III to yield the vinyl groups in protoporphyrinogen IX.</text>
</comment>
<comment type="catalytic activity">
    <reaction evidence="1">
        <text>coproporphyrinogen III + 2 S-adenosyl-L-methionine = protoporphyrinogen IX + 2 5'-deoxyadenosine + 2 L-methionine + 2 CO2</text>
        <dbReference type="Rhea" id="RHEA:15425"/>
        <dbReference type="ChEBI" id="CHEBI:16526"/>
        <dbReference type="ChEBI" id="CHEBI:17319"/>
        <dbReference type="ChEBI" id="CHEBI:57307"/>
        <dbReference type="ChEBI" id="CHEBI:57309"/>
        <dbReference type="ChEBI" id="CHEBI:57844"/>
        <dbReference type="ChEBI" id="CHEBI:59789"/>
        <dbReference type="EC" id="1.3.98.3"/>
    </reaction>
</comment>
<comment type="cofactor">
    <cofactor evidence="1">
        <name>[4Fe-4S] cluster</name>
        <dbReference type="ChEBI" id="CHEBI:49883"/>
    </cofactor>
    <text evidence="1">Binds 1 [4Fe-4S] cluster. The cluster is coordinated with 3 cysteines and an exchangeable S-adenosyl-L-methionine.</text>
</comment>
<comment type="pathway">
    <text>Porphyrin-containing compound metabolism; protoporphyrin-IX biosynthesis; protoporphyrinogen-IX from coproporphyrinogen-III (AdoMet route): step 1/1.</text>
</comment>
<comment type="subunit">
    <text evidence="1">Monomer.</text>
</comment>
<comment type="subcellular location">
    <subcellularLocation>
        <location evidence="1">Cytoplasm</location>
    </subcellularLocation>
</comment>
<comment type="similarity">
    <text evidence="3">Belongs to the anaerobic coproporphyrinogen-III oxidase family.</text>
</comment>
<gene>
    <name type="primary">hemN</name>
    <name type="ordered locus">Pden_1851</name>
</gene>
<evidence type="ECO:0000250" key="1">
    <source>
        <dbReference type="UniProtKB" id="P32131"/>
    </source>
</evidence>
<evidence type="ECO:0000255" key="2">
    <source>
        <dbReference type="PROSITE-ProRule" id="PRU01266"/>
    </source>
</evidence>
<evidence type="ECO:0000305" key="3"/>
<dbReference type="EC" id="1.3.98.3" evidence="1"/>
<dbReference type="EMBL" id="U34353">
    <property type="protein sequence ID" value="AAC44513.1"/>
    <property type="molecule type" value="Genomic_DNA"/>
</dbReference>
<dbReference type="EMBL" id="CP000489">
    <property type="protein sequence ID" value="ABL69948.1"/>
    <property type="molecule type" value="Genomic_DNA"/>
</dbReference>
<dbReference type="PIR" id="S77599">
    <property type="entry name" value="S77599"/>
</dbReference>
<dbReference type="RefSeq" id="WP_011748145.1">
    <property type="nucleotide sequence ID" value="NC_008686.1"/>
</dbReference>
<dbReference type="SMR" id="Q51676"/>
<dbReference type="STRING" id="318586.Pden_1851"/>
<dbReference type="EnsemblBacteria" id="ABL69948">
    <property type="protein sequence ID" value="ABL69948"/>
    <property type="gene ID" value="Pden_1851"/>
</dbReference>
<dbReference type="GeneID" id="93450247"/>
<dbReference type="KEGG" id="pde:Pden_1851"/>
<dbReference type="eggNOG" id="COG0635">
    <property type="taxonomic scope" value="Bacteria"/>
</dbReference>
<dbReference type="HOGENOM" id="CLU_027579_3_0_5"/>
<dbReference type="OrthoDB" id="9808022at2"/>
<dbReference type="UniPathway" id="UPA00251">
    <property type="reaction ID" value="UER00323"/>
</dbReference>
<dbReference type="Proteomes" id="UP000000361">
    <property type="component" value="Chromosome 1"/>
</dbReference>
<dbReference type="GO" id="GO:0005737">
    <property type="term" value="C:cytoplasm"/>
    <property type="evidence" value="ECO:0000250"/>
    <property type="project" value="UniProtKB"/>
</dbReference>
<dbReference type="GO" id="GO:0051539">
    <property type="term" value="F:4 iron, 4 sulfur cluster binding"/>
    <property type="evidence" value="ECO:0000250"/>
    <property type="project" value="UniProtKB"/>
</dbReference>
<dbReference type="GO" id="GO:0051989">
    <property type="term" value="F:coproporphyrinogen dehydrogenase activity"/>
    <property type="evidence" value="ECO:0000250"/>
    <property type="project" value="UniProtKB"/>
</dbReference>
<dbReference type="GO" id="GO:0004109">
    <property type="term" value="F:coproporphyrinogen oxidase activity"/>
    <property type="evidence" value="ECO:0007669"/>
    <property type="project" value="InterPro"/>
</dbReference>
<dbReference type="GO" id="GO:0046872">
    <property type="term" value="F:metal ion binding"/>
    <property type="evidence" value="ECO:0007669"/>
    <property type="project" value="UniProtKB-KW"/>
</dbReference>
<dbReference type="GO" id="GO:0006779">
    <property type="term" value="P:porphyrin-containing compound biosynthetic process"/>
    <property type="evidence" value="ECO:0000250"/>
    <property type="project" value="UniProtKB"/>
</dbReference>
<dbReference type="GO" id="GO:0006782">
    <property type="term" value="P:protoporphyrinogen IX biosynthetic process"/>
    <property type="evidence" value="ECO:0000250"/>
    <property type="project" value="UniProtKB"/>
</dbReference>
<dbReference type="CDD" id="cd01335">
    <property type="entry name" value="Radical_SAM"/>
    <property type="match status" value="1"/>
</dbReference>
<dbReference type="Gene3D" id="1.10.10.920">
    <property type="match status" value="1"/>
</dbReference>
<dbReference type="Gene3D" id="3.20.20.70">
    <property type="entry name" value="Aldolase class I"/>
    <property type="match status" value="1"/>
</dbReference>
<dbReference type="InterPro" id="IPR013785">
    <property type="entry name" value="Aldolase_TIM"/>
</dbReference>
<dbReference type="InterPro" id="IPR004558">
    <property type="entry name" value="Coprogen_oxidase_HemN"/>
</dbReference>
<dbReference type="InterPro" id="IPR034505">
    <property type="entry name" value="Coproporphyrinogen-III_oxidase"/>
</dbReference>
<dbReference type="InterPro" id="IPR006638">
    <property type="entry name" value="Elp3/MiaA/NifB-like_rSAM"/>
</dbReference>
<dbReference type="InterPro" id="IPR007197">
    <property type="entry name" value="rSAM"/>
</dbReference>
<dbReference type="NCBIfam" id="TIGR00538">
    <property type="entry name" value="hemN"/>
    <property type="match status" value="1"/>
</dbReference>
<dbReference type="PANTHER" id="PTHR13932">
    <property type="entry name" value="COPROPORPHYRINIGEN III OXIDASE"/>
    <property type="match status" value="1"/>
</dbReference>
<dbReference type="PANTHER" id="PTHR13932:SF6">
    <property type="entry name" value="OXYGEN-INDEPENDENT COPROPORPHYRINOGEN III OXIDASE"/>
    <property type="match status" value="1"/>
</dbReference>
<dbReference type="Pfam" id="PF04055">
    <property type="entry name" value="Radical_SAM"/>
    <property type="match status" value="1"/>
</dbReference>
<dbReference type="PIRSF" id="PIRSF000167">
    <property type="entry name" value="HemN"/>
    <property type="match status" value="1"/>
</dbReference>
<dbReference type="SFLD" id="SFLDG01065">
    <property type="entry name" value="anaerobic_coproporphyrinogen-I"/>
    <property type="match status" value="1"/>
</dbReference>
<dbReference type="SFLD" id="SFLDS00029">
    <property type="entry name" value="Radical_SAM"/>
    <property type="match status" value="1"/>
</dbReference>
<dbReference type="SMART" id="SM00729">
    <property type="entry name" value="Elp3"/>
    <property type="match status" value="1"/>
</dbReference>
<dbReference type="SUPFAM" id="SSF102114">
    <property type="entry name" value="Radical SAM enzymes"/>
    <property type="match status" value="1"/>
</dbReference>
<dbReference type="PROSITE" id="PS51918">
    <property type="entry name" value="RADICAL_SAM"/>
    <property type="match status" value="1"/>
</dbReference>
<feature type="chain" id="PRO_0000109945" description="Oxygen-independent coproporphyrinogen III oxidase">
    <location>
        <begin position="1"/>
        <end position="451"/>
    </location>
</feature>
<feature type="domain" description="Radical SAM core" evidence="2">
    <location>
        <begin position="45"/>
        <end position="278"/>
    </location>
</feature>
<feature type="binding site" evidence="1">
    <location>
        <position position="54"/>
    </location>
    <ligand>
        <name>S-adenosyl-L-methionine</name>
        <dbReference type="ChEBI" id="CHEBI:59789"/>
        <label>1</label>
    </ligand>
</feature>
<feature type="binding site" evidence="1">
    <location>
        <position position="60"/>
    </location>
    <ligand>
        <name>[4Fe-4S] cluster</name>
        <dbReference type="ChEBI" id="CHEBI:49883"/>
        <note>4Fe-4S-S-AdoMet</note>
    </ligand>
</feature>
<feature type="binding site" evidence="1">
    <location>
        <position position="64"/>
    </location>
    <ligand>
        <name>[4Fe-4S] cluster</name>
        <dbReference type="ChEBI" id="CHEBI:49883"/>
        <note>4Fe-4S-S-AdoMet</note>
    </ligand>
</feature>
<feature type="binding site" evidence="1">
    <location>
        <position position="66"/>
    </location>
    <ligand>
        <name>S-adenosyl-L-methionine</name>
        <dbReference type="ChEBI" id="CHEBI:59789"/>
        <label>2</label>
    </ligand>
</feature>
<feature type="binding site" evidence="1">
    <location>
        <position position="67"/>
    </location>
    <ligand>
        <name>[4Fe-4S] cluster</name>
        <dbReference type="ChEBI" id="CHEBI:49883"/>
        <note>4Fe-4S-S-AdoMet</note>
    </ligand>
</feature>
<feature type="binding site" evidence="1">
    <location>
        <position position="111"/>
    </location>
    <ligand>
        <name>S-adenosyl-L-methionine</name>
        <dbReference type="ChEBI" id="CHEBI:59789"/>
        <label>1</label>
    </ligand>
</feature>
<feature type="binding site" evidence="1">
    <location>
        <begin position="112"/>
        <end position="113"/>
    </location>
    <ligand>
        <name>S-adenosyl-L-methionine</name>
        <dbReference type="ChEBI" id="CHEBI:59789"/>
        <label>2</label>
    </ligand>
</feature>
<feature type="binding site" evidence="1">
    <location>
        <position position="144"/>
    </location>
    <ligand>
        <name>S-adenosyl-L-methionine</name>
        <dbReference type="ChEBI" id="CHEBI:59789"/>
        <label>1</label>
    </ligand>
</feature>
<feature type="binding site" evidence="1">
    <location>
        <position position="171"/>
    </location>
    <ligand>
        <name>S-adenosyl-L-methionine</name>
        <dbReference type="ChEBI" id="CHEBI:59789"/>
        <label>2</label>
    </ligand>
</feature>
<feature type="binding site" evidence="1">
    <location>
        <position position="183"/>
    </location>
    <ligand>
        <name>S-adenosyl-L-methionine</name>
        <dbReference type="ChEBI" id="CHEBI:59789"/>
        <label>2</label>
    </ligand>
</feature>
<feature type="binding site" evidence="1">
    <location>
        <position position="208"/>
    </location>
    <ligand>
        <name>S-adenosyl-L-methionine</name>
        <dbReference type="ChEBI" id="CHEBI:59789"/>
        <label>2</label>
    </ligand>
</feature>
<feature type="binding site" evidence="1">
    <location>
        <position position="242"/>
    </location>
    <ligand>
        <name>S-adenosyl-L-methionine</name>
        <dbReference type="ChEBI" id="CHEBI:59789"/>
        <label>2</label>
    </ligand>
</feature>
<feature type="binding site" evidence="1">
    <location>
        <position position="328"/>
    </location>
    <ligand>
        <name>S-adenosyl-L-methionine</name>
        <dbReference type="ChEBI" id="CHEBI:59789"/>
        <label>1</label>
    </ligand>
</feature>